<protein>
    <recommendedName>
        <fullName evidence="1">Cytochrome b559 subunit alpha</fullName>
    </recommendedName>
    <alternativeName>
        <fullName evidence="1">PSII reaction center subunit V</fullName>
    </alternativeName>
</protein>
<feature type="chain" id="PRO_0000200305" description="Cytochrome b559 subunit alpha">
    <location>
        <begin position="1"/>
        <end position="84"/>
    </location>
</feature>
<feature type="transmembrane region" description="Helical" evidence="1">
    <location>
        <begin position="21"/>
        <end position="35"/>
    </location>
</feature>
<feature type="binding site" description="axial binding residue" evidence="1">
    <location>
        <position position="23"/>
    </location>
    <ligand>
        <name>heme</name>
        <dbReference type="ChEBI" id="CHEBI:30413"/>
        <note>ligand shared with beta subunit</note>
    </ligand>
    <ligandPart>
        <name>Fe</name>
        <dbReference type="ChEBI" id="CHEBI:18248"/>
    </ligandPart>
</feature>
<feature type="sequence conflict" description="In Ref. 1; AAM53426." evidence="2" ref="1">
    <original>N</original>
    <variation>S</variation>
    <location>
        <position position="4"/>
    </location>
</feature>
<organism>
    <name type="scientific">Cuscuta gronovii</name>
    <name type="common">Common dodder</name>
    <name type="synonym">Epithymum gronovii</name>
    <dbReference type="NCBI Taxonomy" id="35886"/>
    <lineage>
        <taxon>Eukaryota</taxon>
        <taxon>Viridiplantae</taxon>
        <taxon>Streptophyta</taxon>
        <taxon>Embryophyta</taxon>
        <taxon>Tracheophyta</taxon>
        <taxon>Spermatophyta</taxon>
        <taxon>Magnoliopsida</taxon>
        <taxon>eudicotyledons</taxon>
        <taxon>Gunneridae</taxon>
        <taxon>Pentapetalae</taxon>
        <taxon>asterids</taxon>
        <taxon>lamiids</taxon>
        <taxon>Solanales</taxon>
        <taxon>Convolvulaceae</taxon>
        <taxon>Cuscuteae</taxon>
        <taxon>Cuscuta</taxon>
        <taxon>Cuscuta subgen. Grammica</taxon>
        <taxon>Cuscuta sect. Oxycarpae</taxon>
    </lineage>
</organism>
<gene>
    <name evidence="1" type="primary">psbE</name>
</gene>
<proteinExistence type="evidence at transcript level"/>
<dbReference type="EMBL" id="AY100954">
    <property type="protein sequence ID" value="AAM53426.1"/>
    <property type="molecule type" value="Genomic_DNA"/>
</dbReference>
<dbReference type="EMBL" id="AM711639">
    <property type="protein sequence ID" value="CAM98342.1"/>
    <property type="molecule type" value="Genomic_DNA"/>
</dbReference>
<dbReference type="RefSeq" id="YP_001430056.1">
    <property type="nucleotide sequence ID" value="NC_009765.1"/>
</dbReference>
<dbReference type="SMR" id="Q8MAV7"/>
<dbReference type="GeneID" id="5536779"/>
<dbReference type="GO" id="GO:0009539">
    <property type="term" value="C:photosystem II reaction center"/>
    <property type="evidence" value="ECO:0007669"/>
    <property type="project" value="InterPro"/>
</dbReference>
<dbReference type="GO" id="GO:0042170">
    <property type="term" value="C:plastid membrane"/>
    <property type="evidence" value="ECO:0007669"/>
    <property type="project" value="UniProtKB-SubCell"/>
</dbReference>
<dbReference type="GO" id="GO:0042651">
    <property type="term" value="C:thylakoid membrane"/>
    <property type="evidence" value="ECO:0007669"/>
    <property type="project" value="UniProtKB-UniRule"/>
</dbReference>
<dbReference type="GO" id="GO:0009055">
    <property type="term" value="F:electron transfer activity"/>
    <property type="evidence" value="ECO:0007669"/>
    <property type="project" value="UniProtKB-UniRule"/>
</dbReference>
<dbReference type="GO" id="GO:0020037">
    <property type="term" value="F:heme binding"/>
    <property type="evidence" value="ECO:0007669"/>
    <property type="project" value="InterPro"/>
</dbReference>
<dbReference type="GO" id="GO:0005506">
    <property type="term" value="F:iron ion binding"/>
    <property type="evidence" value="ECO:0007669"/>
    <property type="project" value="UniProtKB-UniRule"/>
</dbReference>
<dbReference type="GO" id="GO:0009767">
    <property type="term" value="P:photosynthetic electron transport chain"/>
    <property type="evidence" value="ECO:0007669"/>
    <property type="project" value="InterPro"/>
</dbReference>
<dbReference type="Gene3D" id="1.20.5.860">
    <property type="entry name" value="Photosystem II cytochrome b559, alpha subunit"/>
    <property type="match status" value="1"/>
</dbReference>
<dbReference type="HAMAP" id="MF_00642">
    <property type="entry name" value="PSII_PsbE"/>
    <property type="match status" value="1"/>
</dbReference>
<dbReference type="InterPro" id="IPR006217">
    <property type="entry name" value="PSII_cyt_b559_asu"/>
</dbReference>
<dbReference type="InterPro" id="IPR037025">
    <property type="entry name" value="PSII_cyt_b559_asu_sf"/>
</dbReference>
<dbReference type="InterPro" id="IPR006216">
    <property type="entry name" value="PSII_cyt_b559_CS"/>
</dbReference>
<dbReference type="InterPro" id="IPR013081">
    <property type="entry name" value="PSII_cyt_b559_N"/>
</dbReference>
<dbReference type="InterPro" id="IPR013082">
    <property type="entry name" value="PSII_cytb559_asu_lum"/>
</dbReference>
<dbReference type="NCBIfam" id="TIGR01332">
    <property type="entry name" value="cyt_b559_alpha"/>
    <property type="match status" value="1"/>
</dbReference>
<dbReference type="PANTHER" id="PTHR33391">
    <property type="entry name" value="CYTOCHROME B559 SUBUNIT BETA-RELATED"/>
    <property type="match status" value="1"/>
</dbReference>
<dbReference type="PANTHER" id="PTHR33391:SF9">
    <property type="entry name" value="CYTOCHROME B559 SUBUNIT BETA-RELATED"/>
    <property type="match status" value="1"/>
</dbReference>
<dbReference type="Pfam" id="PF00283">
    <property type="entry name" value="Cytochrom_B559"/>
    <property type="match status" value="1"/>
</dbReference>
<dbReference type="Pfam" id="PF00284">
    <property type="entry name" value="Cytochrom_B559a"/>
    <property type="match status" value="1"/>
</dbReference>
<dbReference type="PIRSF" id="PIRSF000036">
    <property type="entry name" value="PsbE"/>
    <property type="match status" value="1"/>
</dbReference>
<dbReference type="SUPFAM" id="SSF161045">
    <property type="entry name" value="Cytochrome b559 subunits"/>
    <property type="match status" value="1"/>
</dbReference>
<dbReference type="PROSITE" id="PS00537">
    <property type="entry name" value="CYTOCHROME_B559"/>
    <property type="match status" value="1"/>
</dbReference>
<comment type="function">
    <text evidence="1">This b-type cytochrome is tightly associated with the reaction center of photosystem II (PSII). PSII is a light-driven water:plastoquinone oxidoreductase that uses light energy to abstract electrons from H(2)O, generating O(2) and a proton gradient subsequently used for ATP formation. It consists of a core antenna complex that captures photons, and an electron transfer chain that converts photonic excitation into a charge separation.</text>
</comment>
<comment type="cofactor">
    <cofactor evidence="1">
        <name>heme b</name>
        <dbReference type="ChEBI" id="CHEBI:60344"/>
    </cofactor>
    <text evidence="1">With its partner (PsbF) binds heme. PSII binds additional chlorophylls, carotenoids and specific lipids.</text>
</comment>
<comment type="subunit">
    <text evidence="1">Heterodimer of an alpha subunit and a beta subunit. PSII is composed of 1 copy each of membrane proteins PsbA, PsbB, PsbC, PsbD, PsbE, PsbF, PsbH, PsbI, PsbJ, PsbK, PsbL, PsbM, PsbT, PsbX, PsbY, PsbZ, Psb30/Ycf12, at least 3 peripheral proteins of the oxygen-evolving complex and a large number of cofactors. It forms dimeric complexes.</text>
</comment>
<comment type="subcellular location">
    <subcellularLocation>
        <location evidence="1">Plastid membrane</location>
        <topology evidence="1">Single-pass membrane protein</topology>
    </subcellularLocation>
</comment>
<comment type="similarity">
    <text evidence="1">Belongs to the PsbE/PsbF family.</text>
</comment>
<comment type="caution">
    <text evidence="2">Young tissue from this organism is photosynthetic and contains some thylakoids, although the photosynthetic activity does not exceed the light compensation point.</text>
</comment>
<evidence type="ECO:0000255" key="1">
    <source>
        <dbReference type="HAMAP-Rule" id="MF_00642"/>
    </source>
</evidence>
<evidence type="ECO:0000305" key="2"/>
<accession>Q8MAV7</accession>
<accession>A7M914</accession>
<geneLocation type="plastid"/>
<keyword id="KW-0249">Electron transport</keyword>
<keyword id="KW-0349">Heme</keyword>
<keyword id="KW-0408">Iron</keyword>
<keyword id="KW-0472">Membrane</keyword>
<keyword id="KW-0479">Metal-binding</keyword>
<keyword id="KW-0602">Photosynthesis</keyword>
<keyword id="KW-0604">Photosystem II</keyword>
<keyword id="KW-0934">Plastid</keyword>
<keyword id="KW-0812">Transmembrane</keyword>
<keyword id="KW-1133">Transmembrane helix</keyword>
<keyword id="KW-0813">Transport</keyword>
<reference key="1">
    <citation type="journal article" date="2002" name="Am. J. Bot.">
        <title>Monophyly of the Convolvulaceae and circumscription of their major lineages based on DNA sequences of multiple chloroplast loci.</title>
        <authorList>
            <person name="Stefanovic S."/>
            <person name="Krueger L."/>
            <person name="Olmstead R.G."/>
        </authorList>
        <dbReference type="AGRICOLA" id="IND23320510"/>
    </citation>
    <scope>NUCLEOTIDE SEQUENCE [GENOMIC DNA]</scope>
</reference>
<reference key="2">
    <citation type="journal article" date="2007" name="BMC Plant Biol.">
        <title>Complete DNA sequences of the plastid genomes of two parasitic flowering plant species, Cuscuta reflexa and Cuscuta gronovii.</title>
        <authorList>
            <person name="Funk H.T."/>
            <person name="Berg S."/>
            <person name="Krupinska K."/>
            <person name="Maier U.-G."/>
            <person name="Krause K."/>
        </authorList>
    </citation>
    <scope>NUCLEOTIDE SEQUENCE [LARGE SCALE GENOMIC DNA]</scope>
    <scope>LACK OF RNA EDITING</scope>
</reference>
<name>PSBE_CUSGR</name>
<sequence>MSGNTGERSFADIITSIRYWVIHSITIPSLFIAGWLFVSTGLAYDVFGSPRPNEYFTENQQGIPLITGRFEPLEEQNEFSRRSQ</sequence>